<keyword id="KW-0903">Direct protein sequencing</keyword>
<keyword id="KW-0378">Hydrolase</keyword>
<keyword id="KW-0645">Protease</keyword>
<keyword id="KW-0720">Serine protease</keyword>
<accession>P29139</accession>
<sequence>MERKVHIIPYQVIKQEQQVNEIPRGVEMIQAPAVWNQTRGRGVKVAVLDTGCDADHPDLKARIIGGRNFTDDDEGDPEIFKDYNGHGTHVAGTIAATENENGVVGVAPEADLLIIKVLNKQGSGQYDWIIQGIYYAIEQKVDIISMSLGGPEDVPELHEAVKKAVASQILVMCAAGNEGDGDDRTDELGYPGCYNEVISVGAINFDRHASEFSNSNNEVDLVAPGEDILSTVPGGKYATFSGTSMATPHVAGALALIKQLANASFERDLTEPELYAQLIKRTIPLGNSPKMEGNGLLYLTAVEELSRIFDTQRVAGILSTASLKVK</sequence>
<name>ISP_PAEPO</name>
<dbReference type="EC" id="3.4.21.-"/>
<dbReference type="EMBL" id="D00862">
    <property type="protein sequence ID" value="BAA00735.1"/>
    <property type="molecule type" value="Genomic_DNA"/>
</dbReference>
<dbReference type="PIR" id="C41335">
    <property type="entry name" value="C41335"/>
</dbReference>
<dbReference type="SMR" id="P29139"/>
<dbReference type="MEROPS" id="S08.030"/>
<dbReference type="eggNOG" id="COG1404">
    <property type="taxonomic scope" value="Bacteria"/>
</dbReference>
<dbReference type="GO" id="GO:0004252">
    <property type="term" value="F:serine-type endopeptidase activity"/>
    <property type="evidence" value="ECO:0007669"/>
    <property type="project" value="InterPro"/>
</dbReference>
<dbReference type="GO" id="GO:0006508">
    <property type="term" value="P:proteolysis"/>
    <property type="evidence" value="ECO:0007669"/>
    <property type="project" value="UniProtKB-KW"/>
</dbReference>
<dbReference type="CDD" id="cd07477">
    <property type="entry name" value="Peptidases_S8_Subtilisin_subset"/>
    <property type="match status" value="1"/>
</dbReference>
<dbReference type="Gene3D" id="3.40.50.200">
    <property type="entry name" value="Peptidase S8/S53 domain"/>
    <property type="match status" value="1"/>
</dbReference>
<dbReference type="InterPro" id="IPR000209">
    <property type="entry name" value="Peptidase_S8/S53_dom"/>
</dbReference>
<dbReference type="InterPro" id="IPR036852">
    <property type="entry name" value="Peptidase_S8/S53_dom_sf"/>
</dbReference>
<dbReference type="InterPro" id="IPR051048">
    <property type="entry name" value="Peptidase_S8/S53_subtilisin"/>
</dbReference>
<dbReference type="InterPro" id="IPR023827">
    <property type="entry name" value="Peptidase_S8_Asp-AS"/>
</dbReference>
<dbReference type="InterPro" id="IPR022398">
    <property type="entry name" value="Peptidase_S8_His-AS"/>
</dbReference>
<dbReference type="InterPro" id="IPR023828">
    <property type="entry name" value="Peptidase_S8_Ser-AS"/>
</dbReference>
<dbReference type="InterPro" id="IPR015500">
    <property type="entry name" value="Peptidase_S8_subtilisin-rel"/>
</dbReference>
<dbReference type="InterPro" id="IPR034202">
    <property type="entry name" value="Subtilisin_Carlsberg-like"/>
</dbReference>
<dbReference type="PANTHER" id="PTHR43399:SF4">
    <property type="entry name" value="CELL WALL-ASSOCIATED PROTEASE"/>
    <property type="match status" value="1"/>
</dbReference>
<dbReference type="PANTHER" id="PTHR43399">
    <property type="entry name" value="SUBTILISIN-RELATED"/>
    <property type="match status" value="1"/>
</dbReference>
<dbReference type="Pfam" id="PF00082">
    <property type="entry name" value="Peptidase_S8"/>
    <property type="match status" value="1"/>
</dbReference>
<dbReference type="PRINTS" id="PR00723">
    <property type="entry name" value="SUBTILISIN"/>
</dbReference>
<dbReference type="SUPFAM" id="SSF52743">
    <property type="entry name" value="Subtilisin-like"/>
    <property type="match status" value="1"/>
</dbReference>
<dbReference type="PROSITE" id="PS51892">
    <property type="entry name" value="SUBTILASE"/>
    <property type="match status" value="1"/>
</dbReference>
<dbReference type="PROSITE" id="PS00136">
    <property type="entry name" value="SUBTILASE_ASP"/>
    <property type="match status" value="1"/>
</dbReference>
<dbReference type="PROSITE" id="PS00137">
    <property type="entry name" value="SUBTILASE_HIS"/>
    <property type="match status" value="1"/>
</dbReference>
<dbReference type="PROSITE" id="PS00138">
    <property type="entry name" value="SUBTILASE_SER"/>
    <property type="match status" value="1"/>
</dbReference>
<feature type="chain" id="PRO_0000076409" description="Intracellular serine protease">
    <location>
        <begin position="1"/>
        <end position="326"/>
    </location>
</feature>
<feature type="domain" description="Peptidase S8" evidence="1">
    <location>
        <begin position="23"/>
        <end position="303"/>
    </location>
</feature>
<feature type="active site" description="Charge relay system" evidence="1">
    <location>
        <position position="49"/>
    </location>
</feature>
<feature type="active site" description="Charge relay system" evidence="1">
    <location>
        <position position="86"/>
    </location>
</feature>
<feature type="active site" description="Charge relay system" evidence="1">
    <location>
        <position position="244"/>
    </location>
</feature>
<reference key="1">
    <citation type="journal article" date="1991" name="J. Bacteriol.">
        <title>Proteases involved in generation of beta- and alpha-amylases from a large amylase precursor in Bacillus polymyxa.</title>
        <authorList>
            <person name="Takekawa S."/>
            <person name="Uozumi N."/>
            <person name="Tsukagoshi N."/>
            <person name="Udaka S."/>
        </authorList>
    </citation>
    <scope>NUCLEOTIDE SEQUENCE [GENOMIC DNA]</scope>
    <scope>PROTEIN SEQUENCE OF 16-35</scope>
    <source>
        <strain>72</strain>
    </source>
</reference>
<organism>
    <name type="scientific">Paenibacillus polymyxa</name>
    <name type="common">Bacillus polymyxa</name>
    <dbReference type="NCBI Taxonomy" id="1406"/>
    <lineage>
        <taxon>Bacteria</taxon>
        <taxon>Bacillati</taxon>
        <taxon>Bacillota</taxon>
        <taxon>Bacilli</taxon>
        <taxon>Bacillales</taxon>
        <taxon>Paenibacillaceae</taxon>
        <taxon>Paenibacillus</taxon>
    </lineage>
</organism>
<protein>
    <recommendedName>
        <fullName>Intracellular serine protease</fullName>
        <ecNumber>3.4.21.-</ecNumber>
    </recommendedName>
</protein>
<comment type="function">
    <text>Involved in the generation of beta- and alpha-amylases from the large amylase precursor.</text>
</comment>
<comment type="similarity">
    <text evidence="2">Belongs to the peptidase S8 family.</text>
</comment>
<gene>
    <name type="primary">isp</name>
</gene>
<proteinExistence type="evidence at protein level"/>
<evidence type="ECO:0000255" key="1">
    <source>
        <dbReference type="PROSITE-ProRule" id="PRU01240"/>
    </source>
</evidence>
<evidence type="ECO:0000305" key="2"/>